<keyword id="KW-0963">Cytoplasm</keyword>
<keyword id="KW-0378">Hydrolase</keyword>
<keyword id="KW-0645">Protease</keyword>
<keyword id="KW-1185">Reference proteome</keyword>
<keyword id="KW-0720">Serine protease</keyword>
<name>CLPP_EHRCR</name>
<accession>Q2GFT8</accession>
<dbReference type="EC" id="3.4.21.92" evidence="1"/>
<dbReference type="EMBL" id="CP000236">
    <property type="protein sequence ID" value="ABD45242.1"/>
    <property type="molecule type" value="Genomic_DNA"/>
</dbReference>
<dbReference type="RefSeq" id="WP_011452886.1">
    <property type="nucleotide sequence ID" value="NC_007799.1"/>
</dbReference>
<dbReference type="SMR" id="Q2GFT8"/>
<dbReference type="STRING" id="205920.ECH_0901"/>
<dbReference type="MEROPS" id="S14.001"/>
<dbReference type="KEGG" id="ech:ECH_0901"/>
<dbReference type="eggNOG" id="COG0740">
    <property type="taxonomic scope" value="Bacteria"/>
</dbReference>
<dbReference type="HOGENOM" id="CLU_058707_3_3_5"/>
<dbReference type="OrthoDB" id="9802800at2"/>
<dbReference type="Proteomes" id="UP000008320">
    <property type="component" value="Chromosome"/>
</dbReference>
<dbReference type="GO" id="GO:0005737">
    <property type="term" value="C:cytoplasm"/>
    <property type="evidence" value="ECO:0007669"/>
    <property type="project" value="UniProtKB-SubCell"/>
</dbReference>
<dbReference type="GO" id="GO:0009368">
    <property type="term" value="C:endopeptidase Clp complex"/>
    <property type="evidence" value="ECO:0007669"/>
    <property type="project" value="TreeGrafter"/>
</dbReference>
<dbReference type="GO" id="GO:0004176">
    <property type="term" value="F:ATP-dependent peptidase activity"/>
    <property type="evidence" value="ECO:0007669"/>
    <property type="project" value="InterPro"/>
</dbReference>
<dbReference type="GO" id="GO:0051117">
    <property type="term" value="F:ATPase binding"/>
    <property type="evidence" value="ECO:0007669"/>
    <property type="project" value="TreeGrafter"/>
</dbReference>
<dbReference type="GO" id="GO:0004252">
    <property type="term" value="F:serine-type endopeptidase activity"/>
    <property type="evidence" value="ECO:0007669"/>
    <property type="project" value="UniProtKB-UniRule"/>
</dbReference>
<dbReference type="GO" id="GO:0006515">
    <property type="term" value="P:protein quality control for misfolded or incompletely synthesized proteins"/>
    <property type="evidence" value="ECO:0007669"/>
    <property type="project" value="TreeGrafter"/>
</dbReference>
<dbReference type="CDD" id="cd07017">
    <property type="entry name" value="S14_ClpP_2"/>
    <property type="match status" value="1"/>
</dbReference>
<dbReference type="FunFam" id="3.90.226.10:FF:000001">
    <property type="entry name" value="ATP-dependent Clp protease proteolytic subunit"/>
    <property type="match status" value="1"/>
</dbReference>
<dbReference type="Gene3D" id="3.90.226.10">
    <property type="entry name" value="2-enoyl-CoA Hydratase, Chain A, domain 1"/>
    <property type="match status" value="1"/>
</dbReference>
<dbReference type="HAMAP" id="MF_00444">
    <property type="entry name" value="ClpP"/>
    <property type="match status" value="1"/>
</dbReference>
<dbReference type="InterPro" id="IPR001907">
    <property type="entry name" value="ClpP"/>
</dbReference>
<dbReference type="InterPro" id="IPR029045">
    <property type="entry name" value="ClpP/crotonase-like_dom_sf"/>
</dbReference>
<dbReference type="InterPro" id="IPR023562">
    <property type="entry name" value="ClpP/TepA"/>
</dbReference>
<dbReference type="InterPro" id="IPR033135">
    <property type="entry name" value="ClpP_His_AS"/>
</dbReference>
<dbReference type="InterPro" id="IPR018215">
    <property type="entry name" value="ClpP_Ser_AS"/>
</dbReference>
<dbReference type="NCBIfam" id="TIGR00493">
    <property type="entry name" value="clpP"/>
    <property type="match status" value="1"/>
</dbReference>
<dbReference type="NCBIfam" id="NF001368">
    <property type="entry name" value="PRK00277.1"/>
    <property type="match status" value="1"/>
</dbReference>
<dbReference type="NCBIfam" id="NF009205">
    <property type="entry name" value="PRK12553.1"/>
    <property type="match status" value="1"/>
</dbReference>
<dbReference type="PANTHER" id="PTHR10381">
    <property type="entry name" value="ATP-DEPENDENT CLP PROTEASE PROTEOLYTIC SUBUNIT"/>
    <property type="match status" value="1"/>
</dbReference>
<dbReference type="PANTHER" id="PTHR10381:SF70">
    <property type="entry name" value="ATP-DEPENDENT CLP PROTEASE PROTEOLYTIC SUBUNIT"/>
    <property type="match status" value="1"/>
</dbReference>
<dbReference type="Pfam" id="PF00574">
    <property type="entry name" value="CLP_protease"/>
    <property type="match status" value="1"/>
</dbReference>
<dbReference type="PRINTS" id="PR00127">
    <property type="entry name" value="CLPPROTEASEP"/>
</dbReference>
<dbReference type="SUPFAM" id="SSF52096">
    <property type="entry name" value="ClpP/crotonase"/>
    <property type="match status" value="1"/>
</dbReference>
<dbReference type="PROSITE" id="PS00382">
    <property type="entry name" value="CLP_PROTEASE_HIS"/>
    <property type="match status" value="1"/>
</dbReference>
<dbReference type="PROSITE" id="PS00381">
    <property type="entry name" value="CLP_PROTEASE_SER"/>
    <property type="match status" value="1"/>
</dbReference>
<comment type="function">
    <text evidence="1">Cleaves peptides in various proteins in a process that requires ATP hydrolysis. Has a chymotrypsin-like activity. Plays a major role in the degradation of misfolded proteins.</text>
</comment>
<comment type="catalytic activity">
    <reaction evidence="1">
        <text>Hydrolysis of proteins to small peptides in the presence of ATP and magnesium. alpha-casein is the usual test substrate. In the absence of ATP, only oligopeptides shorter than five residues are hydrolyzed (such as succinyl-Leu-Tyr-|-NHMec, and Leu-Tyr-Leu-|-Tyr-Trp, in which cleavage of the -Tyr-|-Leu- and -Tyr-|-Trp bonds also occurs).</text>
        <dbReference type="EC" id="3.4.21.92"/>
    </reaction>
</comment>
<comment type="subunit">
    <text evidence="1">Fourteen ClpP subunits assemble into 2 heptameric rings which stack back to back to give a disk-like structure with a central cavity, resembling the structure of eukaryotic proteasomes.</text>
</comment>
<comment type="subcellular location">
    <subcellularLocation>
        <location evidence="1">Cytoplasm</location>
    </subcellularLocation>
</comment>
<comment type="similarity">
    <text evidence="1">Belongs to the peptidase S14 family.</text>
</comment>
<organism>
    <name type="scientific">Ehrlichia chaffeensis (strain ATCC CRL-10679 / Arkansas)</name>
    <dbReference type="NCBI Taxonomy" id="205920"/>
    <lineage>
        <taxon>Bacteria</taxon>
        <taxon>Pseudomonadati</taxon>
        <taxon>Pseudomonadota</taxon>
        <taxon>Alphaproteobacteria</taxon>
        <taxon>Rickettsiales</taxon>
        <taxon>Anaplasmataceae</taxon>
        <taxon>Ehrlichia</taxon>
    </lineage>
</organism>
<feature type="chain" id="PRO_0000236386" description="ATP-dependent Clp protease proteolytic subunit">
    <location>
        <begin position="1"/>
        <end position="199"/>
    </location>
</feature>
<feature type="active site" description="Nucleophile" evidence="1">
    <location>
        <position position="98"/>
    </location>
</feature>
<feature type="active site" evidence="1">
    <location>
        <position position="123"/>
    </location>
</feature>
<reference key="1">
    <citation type="journal article" date="2006" name="PLoS Genet.">
        <title>Comparative genomics of emerging human ehrlichiosis agents.</title>
        <authorList>
            <person name="Dunning Hotopp J.C."/>
            <person name="Lin M."/>
            <person name="Madupu R."/>
            <person name="Crabtree J."/>
            <person name="Angiuoli S.V."/>
            <person name="Eisen J.A."/>
            <person name="Seshadri R."/>
            <person name="Ren Q."/>
            <person name="Wu M."/>
            <person name="Utterback T.R."/>
            <person name="Smith S."/>
            <person name="Lewis M."/>
            <person name="Khouri H."/>
            <person name="Zhang C."/>
            <person name="Niu H."/>
            <person name="Lin Q."/>
            <person name="Ohashi N."/>
            <person name="Zhi N."/>
            <person name="Nelson W.C."/>
            <person name="Brinkac L.M."/>
            <person name="Dodson R.J."/>
            <person name="Rosovitz M.J."/>
            <person name="Sundaram J.P."/>
            <person name="Daugherty S.C."/>
            <person name="Davidsen T."/>
            <person name="Durkin A.S."/>
            <person name="Gwinn M.L."/>
            <person name="Haft D.H."/>
            <person name="Selengut J.D."/>
            <person name="Sullivan S.A."/>
            <person name="Zafar N."/>
            <person name="Zhou L."/>
            <person name="Benahmed F."/>
            <person name="Forberger H."/>
            <person name="Halpin R."/>
            <person name="Mulligan S."/>
            <person name="Robinson J."/>
            <person name="White O."/>
            <person name="Rikihisa Y."/>
            <person name="Tettelin H."/>
        </authorList>
    </citation>
    <scope>NUCLEOTIDE SEQUENCE [LARGE SCALE GENOMIC DNA]</scope>
    <source>
        <strain>ATCC CRL-10679 / Arkansas</strain>
    </source>
</reference>
<sequence length="199" mass="22137">MTLVPMVVEQTSRGERAYDIYSRLLKERIIFITGPIEDQMASLIVAQLIFLESENPEKEICMYINSPGGVVTAGLSIYDTMQYIKPKVSTLCLGQAASMGSLLLAAGEPGMRYALPNSRIMIHQPSGGFQGQATDIEIHAKEILDIKGRLNDIYVKHTGRDLSEVVANMERDNFMRAEKAKDFGIIDKVIEKRLDIGVE</sequence>
<proteinExistence type="inferred from homology"/>
<evidence type="ECO:0000255" key="1">
    <source>
        <dbReference type="HAMAP-Rule" id="MF_00444"/>
    </source>
</evidence>
<gene>
    <name evidence="1" type="primary">clpP</name>
    <name type="ordered locus">ECH_0901</name>
</gene>
<protein>
    <recommendedName>
        <fullName evidence="1">ATP-dependent Clp protease proteolytic subunit</fullName>
        <ecNumber evidence="1">3.4.21.92</ecNumber>
    </recommendedName>
    <alternativeName>
        <fullName evidence="1">Endopeptidase Clp</fullName>
    </alternativeName>
</protein>